<organismHost>
    <name type="scientific">Homo sapiens</name>
    <name type="common">Human</name>
    <dbReference type="NCBI Taxonomy" id="9606"/>
</organismHost>
<reference key="1">
    <citation type="journal article" date="2004" name="J. Gen. Virol.">
        <title>Genetic content of wild-type human cytomegalovirus.</title>
        <authorList>
            <person name="Dolan A."/>
            <person name="Cunningham C."/>
            <person name="Hector R.D."/>
            <person name="Hassan-Walker A.F."/>
            <person name="Lee L."/>
            <person name="Addison C."/>
            <person name="Dargan D.J."/>
            <person name="McGeoch D.J."/>
            <person name="Gatherer D."/>
            <person name="Emery V.C."/>
            <person name="Griffiths P.D."/>
            <person name="Sinzger C."/>
            <person name="McSharry B.P."/>
            <person name="Wilkinson G.W.G."/>
            <person name="Davison A.J."/>
        </authorList>
    </citation>
    <scope>NUCLEOTIDE SEQUENCE [LARGE SCALE GENOMIC DNA]</scope>
</reference>
<comment type="similarity">
    <text evidence="1">Belongs to the HHV-5 UL17 protein family.</text>
</comment>
<feature type="chain" id="PRO_0000417841" description="Protein UL17">
    <location>
        <begin position="1"/>
        <end position="104"/>
    </location>
</feature>
<sequence length="104" mass="12672">MDHALFTHFVGRPRHCRLEMLILDEQVSKRSWDTTVYHRRRKHLPRRRAPCGPQRPAEIPKRRKKAAVLLFWHDLCWLFRRLFFPREDSEPLMSDPARSPEEEE</sequence>
<proteinExistence type="inferred from homology"/>
<evidence type="ECO:0000305" key="1"/>
<dbReference type="EMBL" id="AY446894">
    <property type="protein sequence ID" value="AAR31582.1"/>
    <property type="molecule type" value="Genomic_DNA"/>
</dbReference>
<dbReference type="RefSeq" id="YP_081476.1">
    <property type="nucleotide sequence ID" value="NC_006273.2"/>
</dbReference>
<dbReference type="DNASU" id="3077497"/>
<dbReference type="GeneID" id="3077497"/>
<dbReference type="KEGG" id="vg:3077497"/>
<dbReference type="Reactome" id="R-HSA-9609690">
    <property type="pathway name" value="HCMV Early Events"/>
</dbReference>
<dbReference type="Proteomes" id="UP000000938">
    <property type="component" value="Segment"/>
</dbReference>
<dbReference type="InterPro" id="IPR020527">
    <property type="entry name" value="Cytomegalovir_UL17"/>
</dbReference>
<dbReference type="Pfam" id="PF17640">
    <property type="entry name" value="UL17"/>
    <property type="match status" value="1"/>
</dbReference>
<keyword id="KW-1185">Reference proteome</keyword>
<name>UL17_HCMVM</name>
<accession>F5HHT4</accession>
<protein>
    <recommendedName>
        <fullName>Protein UL17</fullName>
    </recommendedName>
</protein>
<gene>
    <name type="primary">UL17</name>
</gene>
<organism>
    <name type="scientific">Human cytomegalovirus (strain Merlin)</name>
    <name type="common">HHV-5</name>
    <name type="synonym">Human herpesvirus 5</name>
    <dbReference type="NCBI Taxonomy" id="295027"/>
    <lineage>
        <taxon>Viruses</taxon>
        <taxon>Duplodnaviria</taxon>
        <taxon>Heunggongvirae</taxon>
        <taxon>Peploviricota</taxon>
        <taxon>Herviviricetes</taxon>
        <taxon>Herpesvirales</taxon>
        <taxon>Orthoherpesviridae</taxon>
        <taxon>Betaherpesvirinae</taxon>
        <taxon>Cytomegalovirus</taxon>
        <taxon>Cytomegalovirus humanbeta5</taxon>
        <taxon>Human cytomegalovirus</taxon>
    </lineage>
</organism>